<reference key="1">
    <citation type="journal article" date="2009" name="J. Bacteriol.">
        <title>Genomic sequencing reveals regulatory mutations and recombinational events in the widely used MC4100 lineage of Escherichia coli K-12.</title>
        <authorList>
            <person name="Ferenci T."/>
            <person name="Zhou Z."/>
            <person name="Betteridge T."/>
            <person name="Ren Y."/>
            <person name="Liu Y."/>
            <person name="Feng L."/>
            <person name="Reeves P.R."/>
            <person name="Wang L."/>
        </authorList>
    </citation>
    <scope>NUCLEOTIDE SEQUENCE [LARGE SCALE GENOMIC DNA]</scope>
    <source>
        <strain>K12 / MC4100 / BW2952</strain>
    </source>
</reference>
<evidence type="ECO:0000255" key="1">
    <source>
        <dbReference type="HAMAP-Rule" id="MF_01530"/>
    </source>
</evidence>
<accession>C4ZYY8</accession>
<keyword id="KW-0046">Antibiotic resistance</keyword>
<keyword id="KW-0997">Cell inner membrane</keyword>
<keyword id="KW-1003">Cell membrane</keyword>
<keyword id="KW-0472">Membrane</keyword>
<keyword id="KW-0812">Transmembrane</keyword>
<keyword id="KW-1133">Transmembrane helix</keyword>
<keyword id="KW-0813">Transport</keyword>
<name>MDTL_ECOBW</name>
<gene>
    <name evidence="1" type="primary">mdtL</name>
    <name type="ordered locus">BWG_3401</name>
</gene>
<proteinExistence type="inferred from homology"/>
<feature type="chain" id="PRO_1000215399" description="Multidrug resistance protein MdtL">
    <location>
        <begin position="1"/>
        <end position="391"/>
    </location>
</feature>
<feature type="transmembrane region" description="Helical" evidence="1">
    <location>
        <begin position="4"/>
        <end position="24"/>
    </location>
</feature>
<feature type="transmembrane region" description="Helical" evidence="1">
    <location>
        <begin position="42"/>
        <end position="62"/>
    </location>
</feature>
<feature type="transmembrane region" description="Helical" evidence="1">
    <location>
        <begin position="69"/>
        <end position="89"/>
    </location>
</feature>
<feature type="transmembrane region" description="Helical" evidence="1">
    <location>
        <begin position="93"/>
        <end position="113"/>
    </location>
</feature>
<feature type="transmembrane region" description="Helical" evidence="1">
    <location>
        <begin position="131"/>
        <end position="151"/>
    </location>
</feature>
<feature type="transmembrane region" description="Helical" evidence="1">
    <location>
        <begin position="158"/>
        <end position="178"/>
    </location>
</feature>
<feature type="transmembrane region" description="Helical" evidence="1">
    <location>
        <begin position="203"/>
        <end position="222"/>
    </location>
</feature>
<feature type="transmembrane region" description="Helical" evidence="1">
    <location>
        <begin position="245"/>
        <end position="265"/>
    </location>
</feature>
<feature type="transmembrane region" description="Helical" evidence="1">
    <location>
        <begin position="269"/>
        <end position="289"/>
    </location>
</feature>
<feature type="transmembrane region" description="Helical" evidence="1">
    <location>
        <begin position="293"/>
        <end position="313"/>
    </location>
</feature>
<feature type="transmembrane region" description="Helical" evidence="1">
    <location>
        <begin position="331"/>
        <end position="351"/>
    </location>
</feature>
<feature type="transmembrane region" description="Helical" evidence="1">
    <location>
        <begin position="356"/>
        <end position="376"/>
    </location>
</feature>
<dbReference type="EMBL" id="CP001396">
    <property type="protein sequence ID" value="ACR63815.1"/>
    <property type="molecule type" value="Genomic_DNA"/>
</dbReference>
<dbReference type="RefSeq" id="WP_000085982.1">
    <property type="nucleotide sequence ID" value="NC_012759.1"/>
</dbReference>
<dbReference type="SMR" id="C4ZYY8"/>
<dbReference type="KEGG" id="ebw:BWG_3401"/>
<dbReference type="HOGENOM" id="CLU_001265_47_1_6"/>
<dbReference type="GO" id="GO:0005886">
    <property type="term" value="C:plasma membrane"/>
    <property type="evidence" value="ECO:0007669"/>
    <property type="project" value="UniProtKB-SubCell"/>
</dbReference>
<dbReference type="GO" id="GO:0022857">
    <property type="term" value="F:transmembrane transporter activity"/>
    <property type="evidence" value="ECO:0007669"/>
    <property type="project" value="UniProtKB-UniRule"/>
</dbReference>
<dbReference type="GO" id="GO:0046677">
    <property type="term" value="P:response to antibiotic"/>
    <property type="evidence" value="ECO:0007669"/>
    <property type="project" value="UniProtKB-KW"/>
</dbReference>
<dbReference type="CDD" id="cd17320">
    <property type="entry name" value="MFS_MdfA_MDR_like"/>
    <property type="match status" value="1"/>
</dbReference>
<dbReference type="FunFam" id="1.20.1720.10:FF:000003">
    <property type="entry name" value="Multidrug resistance protein MdtL"/>
    <property type="match status" value="1"/>
</dbReference>
<dbReference type="Gene3D" id="1.20.1720.10">
    <property type="entry name" value="Multidrug resistance protein D"/>
    <property type="match status" value="1"/>
</dbReference>
<dbReference type="HAMAP" id="MF_01530">
    <property type="entry name" value="MFS_MdtL"/>
    <property type="match status" value="1"/>
</dbReference>
<dbReference type="InterPro" id="IPR011701">
    <property type="entry name" value="MFS"/>
</dbReference>
<dbReference type="InterPro" id="IPR020846">
    <property type="entry name" value="MFS_dom"/>
</dbReference>
<dbReference type="InterPro" id="IPR050189">
    <property type="entry name" value="MFS_Efflux_Transporters"/>
</dbReference>
<dbReference type="InterPro" id="IPR036259">
    <property type="entry name" value="MFS_trans_sf"/>
</dbReference>
<dbReference type="InterPro" id="IPR023697">
    <property type="entry name" value="Multidrug-R_MdtL"/>
</dbReference>
<dbReference type="NCBIfam" id="NF007782">
    <property type="entry name" value="PRK10473.1"/>
    <property type="match status" value="1"/>
</dbReference>
<dbReference type="PANTHER" id="PTHR43124:SF3">
    <property type="entry name" value="CHLORAMPHENICOL EFFLUX PUMP RV0191"/>
    <property type="match status" value="1"/>
</dbReference>
<dbReference type="PANTHER" id="PTHR43124">
    <property type="entry name" value="PURINE EFFLUX PUMP PBUE"/>
    <property type="match status" value="1"/>
</dbReference>
<dbReference type="Pfam" id="PF07690">
    <property type="entry name" value="MFS_1"/>
    <property type="match status" value="1"/>
</dbReference>
<dbReference type="SUPFAM" id="SSF103473">
    <property type="entry name" value="MFS general substrate transporter"/>
    <property type="match status" value="1"/>
</dbReference>
<dbReference type="PROSITE" id="PS50850">
    <property type="entry name" value="MFS"/>
    <property type="match status" value="1"/>
</dbReference>
<sequence>MSRFLICSFALVLLYPAGIDMYLVGLPRIAADLNASEAQLHIAFSVYLAGMAAAMLFAGKVADRSGRKPVAIPGAALFIIASVFCSLAETSTLFLAGRFLQGLGAGCCYVVAFAILRDTLDDRRRAKVLSLLNGITCIIPVLAPVLGHLIMLKFPWQSLFWAMAMMGIAVLMLSLFILKETRPAAPAASDKPRENSESLLNRFFLSRVVITTLSVSVILTFVNTSPVLLMEIMGFERGEYATIMALTAGVSMTVSFSTPFALGIFKPRTLMITSQVLFLAAGITLAVSPSHAVSLFGITLICAGFSVGFGVAMSQALGPFSLRAGVASSTLGIAQVCGSSLWIWLAAVVGIGAWNMLIGILIACSIVSLLLIMFVAPGRPVAAHEEIHHHA</sequence>
<comment type="function">
    <text evidence="1">Confers resistance to chloramphenicol.</text>
</comment>
<comment type="subcellular location">
    <subcellularLocation>
        <location evidence="1">Cell inner membrane</location>
        <topology evidence="1">Multi-pass membrane protein</topology>
    </subcellularLocation>
</comment>
<comment type="similarity">
    <text evidence="1">Belongs to the major facilitator superfamily. DHA1 family. MdtL (TC 2.A.1.2.22) subfamily.</text>
</comment>
<protein>
    <recommendedName>
        <fullName evidence="1">Multidrug resistance protein MdtL</fullName>
    </recommendedName>
</protein>
<organism>
    <name type="scientific">Escherichia coli (strain K12 / MC4100 / BW2952)</name>
    <dbReference type="NCBI Taxonomy" id="595496"/>
    <lineage>
        <taxon>Bacteria</taxon>
        <taxon>Pseudomonadati</taxon>
        <taxon>Pseudomonadota</taxon>
        <taxon>Gammaproteobacteria</taxon>
        <taxon>Enterobacterales</taxon>
        <taxon>Enterobacteriaceae</taxon>
        <taxon>Escherichia</taxon>
    </lineage>
</organism>